<reference key="1">
    <citation type="journal article" date="2010" name="PLoS Genet.">
        <title>Genome sequence of the plant growth promoting endophytic bacterium Enterobacter sp. 638.</title>
        <authorList>
            <person name="Taghavi S."/>
            <person name="van der Lelie D."/>
            <person name="Hoffman A."/>
            <person name="Zhang Y.B."/>
            <person name="Walla M.D."/>
            <person name="Vangronsveld J."/>
            <person name="Newman L."/>
            <person name="Monchy S."/>
        </authorList>
    </citation>
    <scope>NUCLEOTIDE SEQUENCE [LARGE SCALE GENOMIC DNA]</scope>
    <source>
        <strain>638</strain>
    </source>
</reference>
<gene>
    <name evidence="1" type="primary">surE</name>
    <name type="ordered locus">Ent638_3215</name>
</gene>
<dbReference type="EC" id="3.1.3.5" evidence="1"/>
<dbReference type="EC" id="3.1.3.6" evidence="1"/>
<dbReference type="EC" id="3.6.1.11" evidence="1"/>
<dbReference type="EMBL" id="CP000653">
    <property type="protein sequence ID" value="ABP61879.1"/>
    <property type="molecule type" value="Genomic_DNA"/>
</dbReference>
<dbReference type="RefSeq" id="WP_015960208.1">
    <property type="nucleotide sequence ID" value="NC_009436.1"/>
</dbReference>
<dbReference type="SMR" id="A4WDU9"/>
<dbReference type="STRING" id="399742.Ent638_3215"/>
<dbReference type="KEGG" id="ent:Ent638_3215"/>
<dbReference type="eggNOG" id="COG0496">
    <property type="taxonomic scope" value="Bacteria"/>
</dbReference>
<dbReference type="HOGENOM" id="CLU_045192_1_2_6"/>
<dbReference type="OrthoDB" id="9780815at2"/>
<dbReference type="Proteomes" id="UP000000230">
    <property type="component" value="Chromosome"/>
</dbReference>
<dbReference type="GO" id="GO:0005737">
    <property type="term" value="C:cytoplasm"/>
    <property type="evidence" value="ECO:0007669"/>
    <property type="project" value="UniProtKB-SubCell"/>
</dbReference>
<dbReference type="GO" id="GO:0008254">
    <property type="term" value="F:3'-nucleotidase activity"/>
    <property type="evidence" value="ECO:0007669"/>
    <property type="project" value="UniProtKB-UniRule"/>
</dbReference>
<dbReference type="GO" id="GO:0008253">
    <property type="term" value="F:5'-nucleotidase activity"/>
    <property type="evidence" value="ECO:0007669"/>
    <property type="project" value="UniProtKB-UniRule"/>
</dbReference>
<dbReference type="GO" id="GO:0004309">
    <property type="term" value="F:exopolyphosphatase activity"/>
    <property type="evidence" value="ECO:0007669"/>
    <property type="project" value="UniProtKB-UniRule"/>
</dbReference>
<dbReference type="GO" id="GO:0046872">
    <property type="term" value="F:metal ion binding"/>
    <property type="evidence" value="ECO:0007669"/>
    <property type="project" value="UniProtKB-UniRule"/>
</dbReference>
<dbReference type="GO" id="GO:0000166">
    <property type="term" value="F:nucleotide binding"/>
    <property type="evidence" value="ECO:0007669"/>
    <property type="project" value="UniProtKB-KW"/>
</dbReference>
<dbReference type="FunFam" id="3.40.1210.10:FF:000001">
    <property type="entry name" value="5'/3'-nucleotidase SurE"/>
    <property type="match status" value="1"/>
</dbReference>
<dbReference type="Gene3D" id="3.40.1210.10">
    <property type="entry name" value="Survival protein SurE-like phosphatase/nucleotidase"/>
    <property type="match status" value="1"/>
</dbReference>
<dbReference type="HAMAP" id="MF_00060">
    <property type="entry name" value="SurE"/>
    <property type="match status" value="1"/>
</dbReference>
<dbReference type="InterPro" id="IPR030048">
    <property type="entry name" value="SurE"/>
</dbReference>
<dbReference type="InterPro" id="IPR002828">
    <property type="entry name" value="SurE-like_Pase/nucleotidase"/>
</dbReference>
<dbReference type="InterPro" id="IPR036523">
    <property type="entry name" value="SurE-like_sf"/>
</dbReference>
<dbReference type="NCBIfam" id="NF001488">
    <property type="entry name" value="PRK00346.1-1"/>
    <property type="match status" value="1"/>
</dbReference>
<dbReference type="NCBIfam" id="NF001489">
    <property type="entry name" value="PRK00346.1-3"/>
    <property type="match status" value="1"/>
</dbReference>
<dbReference type="NCBIfam" id="NF001490">
    <property type="entry name" value="PRK00346.1-4"/>
    <property type="match status" value="1"/>
</dbReference>
<dbReference type="NCBIfam" id="TIGR00087">
    <property type="entry name" value="surE"/>
    <property type="match status" value="1"/>
</dbReference>
<dbReference type="PANTHER" id="PTHR30457">
    <property type="entry name" value="5'-NUCLEOTIDASE SURE"/>
    <property type="match status" value="1"/>
</dbReference>
<dbReference type="PANTHER" id="PTHR30457:SF12">
    <property type="entry name" value="5'_3'-NUCLEOTIDASE SURE"/>
    <property type="match status" value="1"/>
</dbReference>
<dbReference type="Pfam" id="PF01975">
    <property type="entry name" value="SurE"/>
    <property type="match status" value="1"/>
</dbReference>
<dbReference type="SUPFAM" id="SSF64167">
    <property type="entry name" value="SurE-like"/>
    <property type="match status" value="1"/>
</dbReference>
<accession>A4WDU9</accession>
<keyword id="KW-0963">Cytoplasm</keyword>
<keyword id="KW-0378">Hydrolase</keyword>
<keyword id="KW-0479">Metal-binding</keyword>
<keyword id="KW-0547">Nucleotide-binding</keyword>
<protein>
    <recommendedName>
        <fullName evidence="1">5'/3'-nucleotidase SurE</fullName>
        <ecNumber evidence="1">3.1.3.5</ecNumber>
        <ecNumber evidence="1">3.1.3.6</ecNumber>
    </recommendedName>
    <alternativeName>
        <fullName evidence="1">Exopolyphosphatase</fullName>
        <ecNumber evidence="1">3.6.1.11</ecNumber>
    </alternativeName>
    <alternativeName>
        <fullName evidence="1">Nucleoside monophosphate phosphohydrolase</fullName>
    </alternativeName>
</protein>
<feature type="chain" id="PRO_1000057412" description="5'/3'-nucleotidase SurE">
    <location>
        <begin position="1"/>
        <end position="253"/>
    </location>
</feature>
<feature type="binding site" evidence="1">
    <location>
        <position position="8"/>
    </location>
    <ligand>
        <name>a divalent metal cation</name>
        <dbReference type="ChEBI" id="CHEBI:60240"/>
    </ligand>
</feature>
<feature type="binding site" evidence="1">
    <location>
        <position position="9"/>
    </location>
    <ligand>
        <name>a divalent metal cation</name>
        <dbReference type="ChEBI" id="CHEBI:60240"/>
    </ligand>
</feature>
<feature type="binding site" evidence="1">
    <location>
        <position position="39"/>
    </location>
    <ligand>
        <name>a divalent metal cation</name>
        <dbReference type="ChEBI" id="CHEBI:60240"/>
    </ligand>
</feature>
<feature type="binding site" evidence="1">
    <location>
        <position position="92"/>
    </location>
    <ligand>
        <name>a divalent metal cation</name>
        <dbReference type="ChEBI" id="CHEBI:60240"/>
    </ligand>
</feature>
<sequence>MRILLSNDDGIHAPGIQTLAKYLREFADVQVVAPDRNRSGASNSLTLESSLRTFAFENGDIAVQMGTPTDCVFLGVNTLMRPGPDVVVSGINAGPNLGDDVIYSGTVAAAMEGRHLGFPALAVSLNGHQHYDTAAAVTCSILRALSREPLRTGRILNINVPDLPLDEIKGIRVTRCGSRHPADQVIPQQDPRGNTLYWIGPPGDKCDAGPDTDFAAVDEGYVSVTPLHVDLTAYNAQDVVSGWLERAGVNTQW</sequence>
<name>SURE_ENT38</name>
<comment type="function">
    <text evidence="1">Nucleotidase with a broad substrate specificity as it can dephosphorylate various ribo- and deoxyribonucleoside 5'-monophosphates and ribonucleoside 3'-monophosphates with highest affinity to 3'-AMP. Also hydrolyzes polyphosphate (exopolyphosphatase activity) with the preference for short-chain-length substrates (P20-25). Might be involved in the regulation of dNTP and NTP pools, and in the turnover of 3'-mononucleotides produced by numerous intracellular RNases (T1, T2, and F) during the degradation of various RNAs.</text>
</comment>
<comment type="catalytic activity">
    <reaction evidence="1">
        <text>a ribonucleoside 5'-phosphate + H2O = a ribonucleoside + phosphate</text>
        <dbReference type="Rhea" id="RHEA:12484"/>
        <dbReference type="ChEBI" id="CHEBI:15377"/>
        <dbReference type="ChEBI" id="CHEBI:18254"/>
        <dbReference type="ChEBI" id="CHEBI:43474"/>
        <dbReference type="ChEBI" id="CHEBI:58043"/>
        <dbReference type="EC" id="3.1.3.5"/>
    </reaction>
</comment>
<comment type="catalytic activity">
    <reaction evidence="1">
        <text>a ribonucleoside 3'-phosphate + H2O = a ribonucleoside + phosphate</text>
        <dbReference type="Rhea" id="RHEA:10144"/>
        <dbReference type="ChEBI" id="CHEBI:13197"/>
        <dbReference type="ChEBI" id="CHEBI:15377"/>
        <dbReference type="ChEBI" id="CHEBI:18254"/>
        <dbReference type="ChEBI" id="CHEBI:43474"/>
        <dbReference type="EC" id="3.1.3.6"/>
    </reaction>
</comment>
<comment type="catalytic activity">
    <reaction evidence="1">
        <text>[phosphate](n) + H2O = [phosphate](n-1) + phosphate + H(+)</text>
        <dbReference type="Rhea" id="RHEA:21528"/>
        <dbReference type="Rhea" id="RHEA-COMP:9859"/>
        <dbReference type="Rhea" id="RHEA-COMP:14279"/>
        <dbReference type="ChEBI" id="CHEBI:15377"/>
        <dbReference type="ChEBI" id="CHEBI:15378"/>
        <dbReference type="ChEBI" id="CHEBI:16838"/>
        <dbReference type="ChEBI" id="CHEBI:43474"/>
        <dbReference type="EC" id="3.6.1.11"/>
    </reaction>
</comment>
<comment type="cofactor">
    <cofactor evidence="1">
        <name>a divalent metal cation</name>
        <dbReference type="ChEBI" id="CHEBI:60240"/>
    </cofactor>
    <text evidence="1">Binds 1 divalent metal cation per subunit.</text>
</comment>
<comment type="subcellular location">
    <subcellularLocation>
        <location evidence="1">Cytoplasm</location>
    </subcellularLocation>
</comment>
<comment type="similarity">
    <text evidence="1">Belongs to the SurE nucleotidase family.</text>
</comment>
<organism>
    <name type="scientific">Enterobacter sp. (strain 638)</name>
    <dbReference type="NCBI Taxonomy" id="399742"/>
    <lineage>
        <taxon>Bacteria</taxon>
        <taxon>Pseudomonadati</taxon>
        <taxon>Pseudomonadota</taxon>
        <taxon>Gammaproteobacteria</taxon>
        <taxon>Enterobacterales</taxon>
        <taxon>Enterobacteriaceae</taxon>
        <taxon>Enterobacter</taxon>
    </lineage>
</organism>
<evidence type="ECO:0000255" key="1">
    <source>
        <dbReference type="HAMAP-Rule" id="MF_00060"/>
    </source>
</evidence>
<proteinExistence type="inferred from homology"/>